<dbReference type="EC" id="6.3.2.2" evidence="1"/>
<dbReference type="EMBL" id="CP000789">
    <property type="protein sequence ID" value="ABU72431.1"/>
    <property type="molecule type" value="Genomic_DNA"/>
</dbReference>
<dbReference type="RefSeq" id="WP_012128888.1">
    <property type="nucleotide sequence ID" value="NC_022269.1"/>
</dbReference>
<dbReference type="SMR" id="A7MZY1"/>
<dbReference type="KEGG" id="vha:VIBHAR_03486"/>
<dbReference type="PATRIC" id="fig|338187.25.peg.2714"/>
<dbReference type="UniPathway" id="UPA00142">
    <property type="reaction ID" value="UER00209"/>
</dbReference>
<dbReference type="Proteomes" id="UP000008152">
    <property type="component" value="Chromosome I"/>
</dbReference>
<dbReference type="GO" id="GO:0005829">
    <property type="term" value="C:cytosol"/>
    <property type="evidence" value="ECO:0007669"/>
    <property type="project" value="TreeGrafter"/>
</dbReference>
<dbReference type="GO" id="GO:0005524">
    <property type="term" value="F:ATP binding"/>
    <property type="evidence" value="ECO:0007669"/>
    <property type="project" value="UniProtKB-KW"/>
</dbReference>
<dbReference type="GO" id="GO:0004357">
    <property type="term" value="F:glutamate-cysteine ligase activity"/>
    <property type="evidence" value="ECO:0007669"/>
    <property type="project" value="UniProtKB-UniRule"/>
</dbReference>
<dbReference type="GO" id="GO:0046872">
    <property type="term" value="F:metal ion binding"/>
    <property type="evidence" value="ECO:0007669"/>
    <property type="project" value="TreeGrafter"/>
</dbReference>
<dbReference type="GO" id="GO:0006750">
    <property type="term" value="P:glutathione biosynthetic process"/>
    <property type="evidence" value="ECO:0007669"/>
    <property type="project" value="UniProtKB-UniRule"/>
</dbReference>
<dbReference type="FunFam" id="3.30.590.20:FF:000001">
    <property type="entry name" value="Glutamate--cysteine ligase"/>
    <property type="match status" value="1"/>
</dbReference>
<dbReference type="Gene3D" id="3.30.590.20">
    <property type="match status" value="1"/>
</dbReference>
<dbReference type="HAMAP" id="MF_00578">
    <property type="entry name" value="Glu_cys_ligase"/>
    <property type="match status" value="1"/>
</dbReference>
<dbReference type="InterPro" id="IPR014746">
    <property type="entry name" value="Gln_synth/guanido_kin_cat_dom"/>
</dbReference>
<dbReference type="InterPro" id="IPR007370">
    <property type="entry name" value="Glu_cys_ligase"/>
</dbReference>
<dbReference type="InterPro" id="IPR006334">
    <property type="entry name" value="Glut_cys_ligase"/>
</dbReference>
<dbReference type="NCBIfam" id="TIGR01434">
    <property type="entry name" value="glu_cys_ligase"/>
    <property type="match status" value="1"/>
</dbReference>
<dbReference type="PANTHER" id="PTHR38761">
    <property type="entry name" value="GLUTAMATE--CYSTEINE LIGASE"/>
    <property type="match status" value="1"/>
</dbReference>
<dbReference type="PANTHER" id="PTHR38761:SF1">
    <property type="entry name" value="GLUTAMATE--CYSTEINE LIGASE"/>
    <property type="match status" value="1"/>
</dbReference>
<dbReference type="Pfam" id="PF04262">
    <property type="entry name" value="Glu_cys_ligase"/>
    <property type="match status" value="1"/>
</dbReference>
<dbReference type="SUPFAM" id="SSF55931">
    <property type="entry name" value="Glutamine synthetase/guanido kinase"/>
    <property type="match status" value="1"/>
</dbReference>
<name>GSH1_VIBC1</name>
<evidence type="ECO:0000255" key="1">
    <source>
        <dbReference type="HAMAP-Rule" id="MF_00578"/>
    </source>
</evidence>
<comment type="catalytic activity">
    <reaction evidence="1">
        <text>L-cysteine + L-glutamate + ATP = gamma-L-glutamyl-L-cysteine + ADP + phosphate + H(+)</text>
        <dbReference type="Rhea" id="RHEA:13285"/>
        <dbReference type="ChEBI" id="CHEBI:15378"/>
        <dbReference type="ChEBI" id="CHEBI:29985"/>
        <dbReference type="ChEBI" id="CHEBI:30616"/>
        <dbReference type="ChEBI" id="CHEBI:35235"/>
        <dbReference type="ChEBI" id="CHEBI:43474"/>
        <dbReference type="ChEBI" id="CHEBI:58173"/>
        <dbReference type="ChEBI" id="CHEBI:456216"/>
        <dbReference type="EC" id="6.3.2.2"/>
    </reaction>
</comment>
<comment type="pathway">
    <text evidence="1">Sulfur metabolism; glutathione biosynthesis; glutathione from L-cysteine and L-glutamate: step 1/2.</text>
</comment>
<comment type="similarity">
    <text evidence="1">Belongs to the glutamate--cysteine ligase type 1 family. Type 1 subfamily.</text>
</comment>
<gene>
    <name evidence="1" type="primary">gshA</name>
    <name type="ordered locus">VIBHAR_03486</name>
</gene>
<accession>A7MZY1</accession>
<reference key="1">
    <citation type="submission" date="2007-08" db="EMBL/GenBank/DDBJ databases">
        <authorList>
            <consortium name="The Vibrio harveyi Genome Sequencing Project"/>
            <person name="Bassler B."/>
            <person name="Clifton S.W."/>
            <person name="Fulton L."/>
            <person name="Delehaunty K."/>
            <person name="Fronick C."/>
            <person name="Harrison M."/>
            <person name="Markivic C."/>
            <person name="Fulton R."/>
            <person name="Tin-Wollam A.-M."/>
            <person name="Shah N."/>
            <person name="Pepin K."/>
            <person name="Nash W."/>
            <person name="Thiruvilangam P."/>
            <person name="Bhonagiri V."/>
            <person name="Waters C."/>
            <person name="Tu K.C."/>
            <person name="Irgon J."/>
            <person name="Wilson R.K."/>
        </authorList>
    </citation>
    <scope>NUCLEOTIDE SEQUENCE [LARGE SCALE GENOMIC DNA]</scope>
    <source>
        <strain>ATCC BAA-1116 / BB120</strain>
    </source>
</reference>
<protein>
    <recommendedName>
        <fullName evidence="1">Glutamate--cysteine ligase</fullName>
        <ecNumber evidence="1">6.3.2.2</ecNumber>
    </recommendedName>
    <alternativeName>
        <fullName evidence="1">Gamma-ECS</fullName>
        <shortName evidence="1">GCS</shortName>
    </alternativeName>
    <alternativeName>
        <fullName evidence="1">Gamma-glutamylcysteine synthetase</fullName>
    </alternativeName>
</protein>
<organism>
    <name type="scientific">Vibrio campbellii (strain ATCC BAA-1116)</name>
    <dbReference type="NCBI Taxonomy" id="2902295"/>
    <lineage>
        <taxon>Bacteria</taxon>
        <taxon>Pseudomonadati</taxon>
        <taxon>Pseudomonadota</taxon>
        <taxon>Gammaproteobacteria</taxon>
        <taxon>Vibrionales</taxon>
        <taxon>Vibrionaceae</taxon>
        <taxon>Vibrio</taxon>
    </lineage>
</organism>
<keyword id="KW-0067">ATP-binding</keyword>
<keyword id="KW-0317">Glutathione biosynthesis</keyword>
<keyword id="KW-0436">Ligase</keyword>
<keyword id="KW-0547">Nucleotide-binding</keyword>
<sequence length="522" mass="59106">MTDFAARLKQVASNPEVFKQFGRGVERETLRYRQDGHLATTPHPEGLGSAFTNKWITTDFSESLLEFITPVSHEIPELMGQLKDIHHFTQTKMGEEKMWPLSMPCYVGSEDDIQLAQYGSSNSAKMKTLYREGLKRRYGSLMQIISGVHFNFSFPESFWDALHGEQDEEARQDTKSDAYFALIRNYYRFGWMIPYFFGASPALCGSFIQGRETDLPFEKIGGTLFLPKATSLRLSDLGYTNSAQSVLKIGFNSIDQYLDGLSDAIRRPSEEFAEIGVKVDGEYRQLNSNILQIENELYAPIRPKRVTKSGEKPSEALQRGGVEYIEVRSLDVNPFSAVGVSEEQVRFLDLFLTWAALSDSDPMDNCELECWRDNWNKVIVSGREKGLMLQIGCQGERLSLQDWAHRVFADLRQIAVEMDSAAGGNAYQAVCDKLESWIDEPELTISGQLLELTKEHGGLGKVGCALGMKFREENLAHSYEQYSADAMETEVATSLEKQKQAEQSDTLSFDDFLEDYFAYLKQ</sequence>
<proteinExistence type="inferred from homology"/>
<feature type="chain" id="PRO_1000025192" description="Glutamate--cysteine ligase">
    <location>
        <begin position="1"/>
        <end position="522"/>
    </location>
</feature>